<name>SYQ_XANOM</name>
<organism>
    <name type="scientific">Xanthomonas oryzae pv. oryzae (strain MAFF 311018)</name>
    <dbReference type="NCBI Taxonomy" id="342109"/>
    <lineage>
        <taxon>Bacteria</taxon>
        <taxon>Pseudomonadati</taxon>
        <taxon>Pseudomonadota</taxon>
        <taxon>Gammaproteobacteria</taxon>
        <taxon>Lysobacterales</taxon>
        <taxon>Lysobacteraceae</taxon>
        <taxon>Xanthomonas</taxon>
    </lineage>
</organism>
<gene>
    <name evidence="1" type="primary">glnS</name>
    <name type="ordered locus">XOO3505</name>
</gene>
<dbReference type="EC" id="6.1.1.18" evidence="1"/>
<dbReference type="EMBL" id="AP008229">
    <property type="protein sequence ID" value="BAE70260.1"/>
    <property type="molecule type" value="Genomic_DNA"/>
</dbReference>
<dbReference type="RefSeq" id="WP_011260138.1">
    <property type="nucleotide sequence ID" value="NC_007705.1"/>
</dbReference>
<dbReference type="SMR" id="Q2NZL7"/>
<dbReference type="KEGG" id="xom:XOO3505"/>
<dbReference type="HOGENOM" id="CLU_001882_2_3_6"/>
<dbReference type="GO" id="GO:0005829">
    <property type="term" value="C:cytosol"/>
    <property type="evidence" value="ECO:0007669"/>
    <property type="project" value="TreeGrafter"/>
</dbReference>
<dbReference type="GO" id="GO:0005524">
    <property type="term" value="F:ATP binding"/>
    <property type="evidence" value="ECO:0007669"/>
    <property type="project" value="UniProtKB-UniRule"/>
</dbReference>
<dbReference type="GO" id="GO:0004819">
    <property type="term" value="F:glutamine-tRNA ligase activity"/>
    <property type="evidence" value="ECO:0007669"/>
    <property type="project" value="UniProtKB-UniRule"/>
</dbReference>
<dbReference type="GO" id="GO:0006425">
    <property type="term" value="P:glutaminyl-tRNA aminoacylation"/>
    <property type="evidence" value="ECO:0007669"/>
    <property type="project" value="InterPro"/>
</dbReference>
<dbReference type="GO" id="GO:0006424">
    <property type="term" value="P:glutamyl-tRNA aminoacylation"/>
    <property type="evidence" value="ECO:0007669"/>
    <property type="project" value="UniProtKB-UniRule"/>
</dbReference>
<dbReference type="FunFam" id="1.10.1160.10:FF:000001">
    <property type="entry name" value="Glutamine--tRNA ligase"/>
    <property type="match status" value="1"/>
</dbReference>
<dbReference type="FunFam" id="2.40.240.10:FF:000020">
    <property type="entry name" value="Glutamine--tRNA ligase"/>
    <property type="match status" value="1"/>
</dbReference>
<dbReference type="FunFam" id="2.40.240.10:FF:000023">
    <property type="entry name" value="Glutamine--tRNA ligase"/>
    <property type="match status" value="1"/>
</dbReference>
<dbReference type="FunFam" id="3.90.800.10:FF:000002">
    <property type="entry name" value="Glutamine--tRNA ligase"/>
    <property type="match status" value="1"/>
</dbReference>
<dbReference type="FunFam" id="3.40.50.620:FF:000037">
    <property type="entry name" value="Glutamine--tRNA ligase cytoplasmic"/>
    <property type="match status" value="1"/>
</dbReference>
<dbReference type="Gene3D" id="1.10.1160.10">
    <property type="entry name" value="Glutamyl-trna Synthetase, Domain 2"/>
    <property type="match status" value="1"/>
</dbReference>
<dbReference type="Gene3D" id="3.90.800.10">
    <property type="entry name" value="Glutamyl-tRNA Synthetase, Domain 3"/>
    <property type="match status" value="1"/>
</dbReference>
<dbReference type="Gene3D" id="3.40.50.620">
    <property type="entry name" value="HUPs"/>
    <property type="match status" value="1"/>
</dbReference>
<dbReference type="Gene3D" id="2.40.240.10">
    <property type="entry name" value="Ribosomal Protein L25, Chain P"/>
    <property type="match status" value="2"/>
</dbReference>
<dbReference type="HAMAP" id="MF_00126">
    <property type="entry name" value="Gln_tRNA_synth"/>
    <property type="match status" value="1"/>
</dbReference>
<dbReference type="InterPro" id="IPR001412">
    <property type="entry name" value="aa-tRNA-synth_I_CS"/>
</dbReference>
<dbReference type="InterPro" id="IPR004514">
    <property type="entry name" value="Gln-tRNA-synth"/>
</dbReference>
<dbReference type="InterPro" id="IPR050132">
    <property type="entry name" value="Gln/Glu-tRNA_Ligase"/>
</dbReference>
<dbReference type="InterPro" id="IPR022861">
    <property type="entry name" value="Gln_tRNA_ligase_bac"/>
</dbReference>
<dbReference type="InterPro" id="IPR000924">
    <property type="entry name" value="Glu/Gln-tRNA-synth"/>
</dbReference>
<dbReference type="InterPro" id="IPR020058">
    <property type="entry name" value="Glu/Gln-tRNA-synth_Ib_cat-dom"/>
</dbReference>
<dbReference type="InterPro" id="IPR020059">
    <property type="entry name" value="Glu/Gln-tRNA-synth_Ib_codon-bd"/>
</dbReference>
<dbReference type="InterPro" id="IPR020061">
    <property type="entry name" value="Glu_tRNA_lig_a-bdl"/>
</dbReference>
<dbReference type="InterPro" id="IPR020056">
    <property type="entry name" value="Rbsml_bL25/Gln-tRNA_synth_N"/>
</dbReference>
<dbReference type="InterPro" id="IPR011035">
    <property type="entry name" value="Ribosomal_bL25/Gln-tRNA_synth"/>
</dbReference>
<dbReference type="InterPro" id="IPR014729">
    <property type="entry name" value="Rossmann-like_a/b/a_fold"/>
</dbReference>
<dbReference type="InterPro" id="IPR049437">
    <property type="entry name" value="tRNA-synt_1c_C2"/>
</dbReference>
<dbReference type="NCBIfam" id="TIGR00440">
    <property type="entry name" value="glnS"/>
    <property type="match status" value="1"/>
</dbReference>
<dbReference type="NCBIfam" id="NF011291">
    <property type="entry name" value="PRK14703.1"/>
    <property type="match status" value="1"/>
</dbReference>
<dbReference type="PANTHER" id="PTHR43097:SF5">
    <property type="entry name" value="GLUTAMATE--TRNA LIGASE"/>
    <property type="match status" value="1"/>
</dbReference>
<dbReference type="PANTHER" id="PTHR43097">
    <property type="entry name" value="GLUTAMINE-TRNA LIGASE"/>
    <property type="match status" value="1"/>
</dbReference>
<dbReference type="Pfam" id="PF00749">
    <property type="entry name" value="tRNA-synt_1c"/>
    <property type="match status" value="1"/>
</dbReference>
<dbReference type="Pfam" id="PF03950">
    <property type="entry name" value="tRNA-synt_1c_C"/>
    <property type="match status" value="1"/>
</dbReference>
<dbReference type="Pfam" id="PF20974">
    <property type="entry name" value="tRNA-synt_1c_C2"/>
    <property type="match status" value="1"/>
</dbReference>
<dbReference type="PRINTS" id="PR00987">
    <property type="entry name" value="TRNASYNTHGLU"/>
</dbReference>
<dbReference type="SUPFAM" id="SSF52374">
    <property type="entry name" value="Nucleotidylyl transferase"/>
    <property type="match status" value="1"/>
</dbReference>
<dbReference type="SUPFAM" id="SSF50715">
    <property type="entry name" value="Ribosomal protein L25-like"/>
    <property type="match status" value="1"/>
</dbReference>
<dbReference type="PROSITE" id="PS00178">
    <property type="entry name" value="AA_TRNA_LIGASE_I"/>
    <property type="match status" value="1"/>
</dbReference>
<comment type="catalytic activity">
    <reaction evidence="1">
        <text>tRNA(Gln) + L-glutamine + ATP = L-glutaminyl-tRNA(Gln) + AMP + diphosphate</text>
        <dbReference type="Rhea" id="RHEA:20121"/>
        <dbReference type="Rhea" id="RHEA-COMP:9662"/>
        <dbReference type="Rhea" id="RHEA-COMP:9681"/>
        <dbReference type="ChEBI" id="CHEBI:30616"/>
        <dbReference type="ChEBI" id="CHEBI:33019"/>
        <dbReference type="ChEBI" id="CHEBI:58359"/>
        <dbReference type="ChEBI" id="CHEBI:78442"/>
        <dbReference type="ChEBI" id="CHEBI:78521"/>
        <dbReference type="ChEBI" id="CHEBI:456215"/>
        <dbReference type="EC" id="6.1.1.18"/>
    </reaction>
</comment>
<comment type="subunit">
    <text evidence="1">Monomer.</text>
</comment>
<comment type="subcellular location">
    <subcellularLocation>
        <location evidence="1">Cytoplasm</location>
    </subcellularLocation>
</comment>
<comment type="similarity">
    <text evidence="1">Belongs to the class-I aminoacyl-tRNA synthetase family.</text>
</comment>
<keyword id="KW-0030">Aminoacyl-tRNA synthetase</keyword>
<keyword id="KW-0067">ATP-binding</keyword>
<keyword id="KW-0963">Cytoplasm</keyword>
<keyword id="KW-0436">Ligase</keyword>
<keyword id="KW-0547">Nucleotide-binding</keyword>
<keyword id="KW-0648">Protein biosynthesis</keyword>
<accession>Q2NZL7</accession>
<feature type="chain" id="PRO_0000242883" description="Glutamine--tRNA ligase">
    <location>
        <begin position="1"/>
        <end position="579"/>
    </location>
</feature>
<feature type="short sequence motif" description="'HIGH' region" evidence="1">
    <location>
        <begin position="41"/>
        <end position="51"/>
    </location>
</feature>
<feature type="short sequence motif" description="'KMSKS' region" evidence="1">
    <location>
        <begin position="292"/>
        <end position="296"/>
    </location>
</feature>
<feature type="binding site" evidence="1">
    <location>
        <begin position="42"/>
        <end position="44"/>
    </location>
    <ligand>
        <name>ATP</name>
        <dbReference type="ChEBI" id="CHEBI:30616"/>
    </ligand>
</feature>
<feature type="binding site" evidence="1">
    <location>
        <begin position="48"/>
        <end position="54"/>
    </location>
    <ligand>
        <name>ATP</name>
        <dbReference type="ChEBI" id="CHEBI:30616"/>
    </ligand>
</feature>
<feature type="binding site" evidence="1">
    <location>
        <position position="74"/>
    </location>
    <ligand>
        <name>L-glutamine</name>
        <dbReference type="ChEBI" id="CHEBI:58359"/>
    </ligand>
</feature>
<feature type="binding site" evidence="1">
    <location>
        <position position="218"/>
    </location>
    <ligand>
        <name>L-glutamine</name>
        <dbReference type="ChEBI" id="CHEBI:58359"/>
    </ligand>
</feature>
<feature type="binding site" evidence="1">
    <location>
        <position position="237"/>
    </location>
    <ligand>
        <name>ATP</name>
        <dbReference type="ChEBI" id="CHEBI:30616"/>
    </ligand>
</feature>
<feature type="binding site" evidence="1">
    <location>
        <begin position="285"/>
        <end position="286"/>
    </location>
    <ligand>
        <name>ATP</name>
        <dbReference type="ChEBI" id="CHEBI:30616"/>
    </ligand>
</feature>
<feature type="binding site" evidence="1">
    <location>
        <begin position="293"/>
        <end position="295"/>
    </location>
    <ligand>
        <name>ATP</name>
        <dbReference type="ChEBI" id="CHEBI:30616"/>
    </ligand>
</feature>
<sequence length="579" mass="65668">MSETLATDATTPAEKKDFIRQIVREDLASGKHTVIRTRFPPEPNGYLHIGHAKAICLDFGLAAEFGGLCNLRLDDTNPAKEDPEFAAAIQDDVRWLGYDWAQLRHASDYFEVYYLAAQKLIRDGHAFVCDLSAEQVRQYRGTLTEPGRHSPFRERSVEENLDLFQRMRAGEFPDGARTLRAKIDMASGNINLRDPALYRIKHVEHQNTGNAWPIYPMYDFAHSLGDAVEGITHSLCTLEFEDHRPLYDWCVDKVDLVGHPELLQPLLDKGLPREAAKPRQIEFSRLNINYTVMSKRKLTALVEEQLVDGWDDPRMYTLQGLRRRGYTPAAMRLFVERVGISKQNSLIDFSVLEGCLREDLDAAAARRMAVIDPLKLVLTNLPEGHTETLQFSNHPKDESFGTREVPFARVLWIEREDFAEVPPKGWKRLVPGGEIRLRGAGIARVDEVIKNADGDIVALRGWLDPESRPGMEGANRKVKGTIHWVSAAHAVEAEIRLYDRLFSVEKPDDESEGKTYRDYLNPESKRNVRGYVEPSAALAAPEQAFQFERTGYFVADSRDHSASTPVFNRSVTLRDAWAK</sequence>
<protein>
    <recommendedName>
        <fullName evidence="1">Glutamine--tRNA ligase</fullName>
        <ecNumber evidence="1">6.1.1.18</ecNumber>
    </recommendedName>
    <alternativeName>
        <fullName evidence="1">Glutaminyl-tRNA synthetase</fullName>
        <shortName evidence="1">GlnRS</shortName>
    </alternativeName>
</protein>
<evidence type="ECO:0000255" key="1">
    <source>
        <dbReference type="HAMAP-Rule" id="MF_00126"/>
    </source>
</evidence>
<proteinExistence type="inferred from homology"/>
<reference key="1">
    <citation type="journal article" date="2005" name="Jpn. Agric. Res. Q.">
        <title>Genome sequence of Xanthomonas oryzae pv. oryzae suggests contribution of large numbers of effector genes and insertion sequences to its race diversity.</title>
        <authorList>
            <person name="Ochiai H."/>
            <person name="Inoue Y."/>
            <person name="Takeya M."/>
            <person name="Sasaki A."/>
            <person name="Kaku H."/>
        </authorList>
    </citation>
    <scope>NUCLEOTIDE SEQUENCE [LARGE SCALE GENOMIC DNA]</scope>
    <source>
        <strain>MAFF 311018</strain>
    </source>
</reference>